<protein>
    <recommendedName>
        <fullName evidence="1">Dual-action ribosomal maturation protein DarP</fullName>
    </recommendedName>
    <alternativeName>
        <fullName evidence="1">Large ribosomal subunit assembly factor DarP</fullName>
    </alternativeName>
</protein>
<proteinExistence type="inferred from homology"/>
<keyword id="KW-0963">Cytoplasm</keyword>
<keyword id="KW-0690">Ribosome biogenesis</keyword>
<keyword id="KW-0694">RNA-binding</keyword>
<keyword id="KW-0699">rRNA-binding</keyword>
<evidence type="ECO:0000255" key="1">
    <source>
        <dbReference type="HAMAP-Rule" id="MF_00765"/>
    </source>
</evidence>
<feature type="chain" id="PRO_0000208234" description="Dual-action ribosomal maturation protein DarP">
    <location>
        <begin position="1"/>
        <end position="185"/>
    </location>
</feature>
<name>DARP_VIBVY</name>
<dbReference type="EMBL" id="BA000037">
    <property type="protein sequence ID" value="BAC93204.1"/>
    <property type="molecule type" value="Genomic_DNA"/>
</dbReference>
<dbReference type="SMR" id="Q7MPC4"/>
<dbReference type="STRING" id="672.VV93_v1c04060"/>
<dbReference type="KEGG" id="vvy:VV0440"/>
<dbReference type="eggNOG" id="COG3028">
    <property type="taxonomic scope" value="Bacteria"/>
</dbReference>
<dbReference type="HOGENOM" id="CLU_106757_2_0_6"/>
<dbReference type="Proteomes" id="UP000002675">
    <property type="component" value="Chromosome I"/>
</dbReference>
<dbReference type="GO" id="GO:0005829">
    <property type="term" value="C:cytosol"/>
    <property type="evidence" value="ECO:0007669"/>
    <property type="project" value="TreeGrafter"/>
</dbReference>
<dbReference type="GO" id="GO:0043022">
    <property type="term" value="F:ribosome binding"/>
    <property type="evidence" value="ECO:0007669"/>
    <property type="project" value="UniProtKB-UniRule"/>
</dbReference>
<dbReference type="GO" id="GO:0019843">
    <property type="term" value="F:rRNA binding"/>
    <property type="evidence" value="ECO:0007669"/>
    <property type="project" value="UniProtKB-UniRule"/>
</dbReference>
<dbReference type="GO" id="GO:1902626">
    <property type="term" value="P:assembly of large subunit precursor of preribosome"/>
    <property type="evidence" value="ECO:0007669"/>
    <property type="project" value="UniProtKB-UniRule"/>
</dbReference>
<dbReference type="CDD" id="cd16331">
    <property type="entry name" value="YjgA-like"/>
    <property type="match status" value="1"/>
</dbReference>
<dbReference type="FunFam" id="1.10.60.30:FF:000002">
    <property type="entry name" value="UPF0307 protein YjgA"/>
    <property type="match status" value="1"/>
</dbReference>
<dbReference type="Gene3D" id="1.10.60.30">
    <property type="entry name" value="PSPTO4464-like domains"/>
    <property type="match status" value="2"/>
</dbReference>
<dbReference type="HAMAP" id="MF_00765">
    <property type="entry name" value="DarP"/>
    <property type="match status" value="1"/>
</dbReference>
<dbReference type="InterPro" id="IPR006839">
    <property type="entry name" value="DarP"/>
</dbReference>
<dbReference type="InterPro" id="IPR023153">
    <property type="entry name" value="DarP_sf"/>
</dbReference>
<dbReference type="NCBIfam" id="NF003593">
    <property type="entry name" value="PRK05255.1-1"/>
    <property type="match status" value="1"/>
</dbReference>
<dbReference type="PANTHER" id="PTHR38101">
    <property type="entry name" value="UPF0307 PROTEIN YJGA"/>
    <property type="match status" value="1"/>
</dbReference>
<dbReference type="PANTHER" id="PTHR38101:SF1">
    <property type="entry name" value="UPF0307 PROTEIN YJGA"/>
    <property type="match status" value="1"/>
</dbReference>
<dbReference type="Pfam" id="PF04751">
    <property type="entry name" value="DarP"/>
    <property type="match status" value="1"/>
</dbReference>
<dbReference type="PIRSF" id="PIRSF016183">
    <property type="entry name" value="UCP016183"/>
    <property type="match status" value="1"/>
</dbReference>
<dbReference type="SUPFAM" id="SSF158710">
    <property type="entry name" value="PSPTO4464-like"/>
    <property type="match status" value="1"/>
</dbReference>
<gene>
    <name evidence="1" type="primary">darP</name>
    <name type="ordered locus">VV0440</name>
</gene>
<comment type="function">
    <text evidence="1">Member of a network of 50S ribosomal subunit biogenesis factors which assembles along the 30S-50S interface, preventing incorrect 23S rRNA structures from forming. Promotes peptidyl transferase center (PTC) maturation.</text>
</comment>
<comment type="subcellular location">
    <subcellularLocation>
        <location evidence="1">Cytoplasm</location>
    </subcellularLocation>
    <text evidence="1">Associates with late stage pre-50S ribosomal subunits.</text>
</comment>
<comment type="similarity">
    <text evidence="1">Belongs to the DarP family.</text>
</comment>
<reference key="1">
    <citation type="journal article" date="2003" name="Genome Res.">
        <title>Comparative genome analysis of Vibrio vulnificus, a marine pathogen.</title>
        <authorList>
            <person name="Chen C.-Y."/>
            <person name="Wu K.-M."/>
            <person name="Chang Y.-C."/>
            <person name="Chang C.-H."/>
            <person name="Tsai H.-C."/>
            <person name="Liao T.-L."/>
            <person name="Liu Y.-M."/>
            <person name="Chen H.-J."/>
            <person name="Shen A.B.-T."/>
            <person name="Li J.-C."/>
            <person name="Su T.-L."/>
            <person name="Shao C.-P."/>
            <person name="Lee C.-T."/>
            <person name="Hor L.-I."/>
            <person name="Tsai S.-F."/>
        </authorList>
    </citation>
    <scope>NUCLEOTIDE SEQUENCE [LARGE SCALE GENOMIC DNA]</scope>
    <source>
        <strain>YJ016</strain>
    </source>
</reference>
<accession>Q7MPC4</accession>
<sequence length="185" mass="21533">MARKNQKAPWEPEEEYILVSKSEMKRDMDALQKLGEELVELKPSVLAKFPISEELLDAIKDAQRFKNEARRRQLQYIGKVMRQEDPEPIQAALDKIRNKHSQNTAVLHKLETLRERIVEQGDSAIDDVVALYPDADRQRLRQLARMATKEKQANKPPKAYREIFQILKQLNDDAVSDSIENELKQ</sequence>
<organism>
    <name type="scientific">Vibrio vulnificus (strain YJ016)</name>
    <dbReference type="NCBI Taxonomy" id="196600"/>
    <lineage>
        <taxon>Bacteria</taxon>
        <taxon>Pseudomonadati</taxon>
        <taxon>Pseudomonadota</taxon>
        <taxon>Gammaproteobacteria</taxon>
        <taxon>Vibrionales</taxon>
        <taxon>Vibrionaceae</taxon>
        <taxon>Vibrio</taxon>
    </lineage>
</organism>